<organism>
    <name type="scientific">Drosophila melanogaster</name>
    <name type="common">Fruit fly</name>
    <dbReference type="NCBI Taxonomy" id="7227"/>
    <lineage>
        <taxon>Eukaryota</taxon>
        <taxon>Metazoa</taxon>
        <taxon>Ecdysozoa</taxon>
        <taxon>Arthropoda</taxon>
        <taxon>Hexapoda</taxon>
        <taxon>Insecta</taxon>
        <taxon>Pterygota</taxon>
        <taxon>Neoptera</taxon>
        <taxon>Endopterygota</taxon>
        <taxon>Diptera</taxon>
        <taxon>Brachycera</taxon>
        <taxon>Muscomorpha</taxon>
        <taxon>Ephydroidea</taxon>
        <taxon>Drosophilidae</taxon>
        <taxon>Drosophila</taxon>
        <taxon>Sophophora</taxon>
    </lineage>
</organism>
<protein>
    <recommendedName>
        <fullName>Innexin inx2</fullName>
        <shortName>Innexin-2</shortName>
    </recommendedName>
    <alternativeName>
        <fullName>Gap junction protein prp33</fullName>
    </alternativeName>
    <alternativeName>
        <fullName>Pas-related protein 33</fullName>
    </alternativeName>
</protein>
<feature type="chain" id="PRO_0000208496" description="Innexin inx2">
    <location>
        <begin position="1"/>
        <end position="367"/>
    </location>
</feature>
<feature type="topological domain" description="Cytoplasmic" evidence="1">
    <location>
        <begin position="1"/>
        <end position="22"/>
    </location>
</feature>
<feature type="transmembrane region" description="Helical" evidence="2">
    <location>
        <begin position="23"/>
        <end position="43"/>
    </location>
</feature>
<feature type="topological domain" description="Extracellular" evidence="1">
    <location>
        <begin position="44"/>
        <end position="109"/>
    </location>
</feature>
<feature type="transmembrane region" description="Helical" evidence="2">
    <location>
        <begin position="110"/>
        <end position="130"/>
    </location>
</feature>
<feature type="topological domain" description="Cytoplasmic" evidence="1">
    <location>
        <begin position="131"/>
        <end position="179"/>
    </location>
</feature>
<feature type="transmembrane region" description="Helical" evidence="2">
    <location>
        <begin position="180"/>
        <end position="200"/>
    </location>
</feature>
<feature type="topological domain" description="Extracellular" evidence="1">
    <location>
        <begin position="201"/>
        <end position="266"/>
    </location>
</feature>
<feature type="transmembrane region" description="Helical" evidence="2">
    <location>
        <begin position="267"/>
        <end position="287"/>
    </location>
</feature>
<feature type="topological domain" description="Cytoplasmic" evidence="1">
    <location>
        <begin position="288"/>
        <end position="367"/>
    </location>
</feature>
<feature type="region of interest" description="Interaction with shg">
    <location>
        <begin position="130"/>
        <end position="179"/>
    </location>
</feature>
<comment type="function">
    <text evidence="5 7 9 10">Structural components of the gap junctions. Involved in gap junctional communication between germline and somatic cells which is essential for normal oogenesis. In embryonic epidermis, required for epithelial morphogenesis. Required for keyhole formation during early stages of proventriculus development in response to wg signaling. In follicle cells, promotes the formation of egg chambers in part through regulation of shg and baz at the boundary between germ cells and follicle cells. In inner germarial sheath cells, required for survival of early germ cells and for cyst formation.</text>
</comment>
<comment type="subunit">
    <text evidence="3 4 7 8">Monomer and heterooligomer with ogre or Inx3 (via cytoplasmic C-terminal region). Interacts (via cytoplasmic loop) with shg (via cytoplasmic region). Interacts with arm.</text>
</comment>
<comment type="subcellular location">
    <subcellularLocation>
        <location evidence="11">Cell membrane</location>
        <topology evidence="2">Multi-pass membrane protein</topology>
    </subcellularLocation>
    <subcellularLocation>
        <location>Cell junction</location>
        <location>Gap junction</location>
    </subcellularLocation>
    <subcellularLocation>
        <location>Cytoplasm</location>
    </subcellularLocation>
    <subcellularLocation>
        <location>Apical cell membrane</location>
    </subcellularLocation>
    <subcellularLocation>
        <location>Apicolateral cell membrane</location>
    </subcellularLocation>
    <subcellularLocation>
        <location>Basolateral cell membrane</location>
    </subcellularLocation>
    <subcellularLocation>
        <location>Lateral cell membrane</location>
    </subcellularLocation>
    <text>In ovary, localizes to the apicolateral membrane between follicle cells and to the apical membrane between follicle cells and germline cells. Accumulates in the apicolateral membrane of epithelial cells in the epidermis. In salivary gland cells, accumulates in the basolateral membrane. In hindgut epithelial cells, accumulates in the lateral membrane. In nurse cells, localizes around the nuclei at oogenesis stage 10a and then, during stages 10b and 11, in cytoplasmic clouds and particles which become delivered into the oocyte during nurse cell regression.</text>
</comment>
<comment type="tissue specificity">
    <text evidence="3 4 5 6 7 8 9 10">In ovary, expressed in inner germarial sheath cells, prefollicular cells, follicle cells, nurse cells and oocytes. Expressed in embryonic epithelial cells. Expressed in foregut and hindgut from stage 11-17, segmentally repeated tracheal placodes at stage 14, salivary gland at stage 16 and proventriculus at stage 16-17 (at protein level). During germband extension stage (stage 7), expressed in epidermal epithelial cells. Expressed in cephalic furrow. Repeating epidermal pattern emerges at stage 11, refines to one or two cells at each side of the segment borders by stage 13. Expressed in the imaginal wing disk. In pupae, expressed in the CNS and in primary, secondary and tertiary pigment cells of the retina. Expressed in optic lamina of the adult CNS.</text>
</comment>
<comment type="developmental stage">
    <text evidence="5 6 8">Expressed maternally and zygotically. Expressed during oogenesis and embryogenesis. Expressed in larvae and pupae.</text>
</comment>
<comment type="induction">
    <text evidence="5">Expression in embryos at ectoderm/endoderm boundaries during gut organogenesis is induced by activation of the wg signaling cascade.</text>
</comment>
<comment type="disruption phenotype">
    <text evidence="5 7 10">Female sterility. Only one third of the zygotic mutant embryos survive up to the first instar larval stage. These mutant larvae display a feeding defect most probably caused by a keyhole formation defect during proventriculus development. The feeding defect may result in larvae death by starvation. Zygotic mutant embryos display large holes in the head region and a variable spectrum of segment defects. In maternal and zygotic mutant embryos, epithelial tissues and organs are severely affected, the cuticle fails to form and extensive cell death occurs.</text>
</comment>
<comment type="similarity">
    <text evidence="2">Belongs to the pannexin family.</text>
</comment>
<accession>Q9V427</accession>
<accession>A4V431</accession>
<evidence type="ECO:0000255" key="1"/>
<evidence type="ECO:0000255" key="2">
    <source>
        <dbReference type="PROSITE-ProRule" id="PRU00351"/>
    </source>
</evidence>
<evidence type="ECO:0000269" key="3">
    <source>
    </source>
</evidence>
<evidence type="ECO:0000269" key="4">
    <source>
    </source>
</evidence>
<evidence type="ECO:0000269" key="5">
    <source>
    </source>
</evidence>
<evidence type="ECO:0000269" key="6">
    <source>
    </source>
</evidence>
<evidence type="ECO:0000269" key="7">
    <source>
    </source>
</evidence>
<evidence type="ECO:0000269" key="8">
    <source>
    </source>
</evidence>
<evidence type="ECO:0000269" key="9">
    <source>
    </source>
</evidence>
<evidence type="ECO:0000269" key="10">
    <source>
    </source>
</evidence>
<evidence type="ECO:0000305" key="11"/>
<gene>
    <name type="primary">Inx2</name>
    <name type="synonym">prp33</name>
    <name type="ORF">CG4590</name>
</gene>
<reference key="1">
    <citation type="journal article" date="1999" name="Gene">
        <title>Drosophila has several genes for gap junction proteins.</title>
        <authorList>
            <person name="Curtin K.D."/>
            <person name="Zhang Z."/>
            <person name="Wyman R.J."/>
        </authorList>
    </citation>
    <scope>NUCLEOTIDE SEQUENCE [MRNA]</scope>
    <scope>SUBUNIT</scope>
    <scope>TISSUE SPECIFICITY</scope>
    <source>
        <tissue>Head</tissue>
    </source>
</reference>
<reference key="2">
    <citation type="journal article" date="2000" name="Mol. Biol. Cell">
        <title>Two Drosophila innexins are expressed in overlapping domains and cooperate to form gap-junction channels.</title>
        <authorList>
            <person name="Stebbings L.A."/>
            <person name="Todman M.G."/>
            <person name="Phelan P."/>
            <person name="Bacon J.P."/>
            <person name="Davies J.A."/>
        </authorList>
    </citation>
    <scope>NUCLEOTIDE SEQUENCE [MRNA]</scope>
    <scope>SUBUNIT</scope>
    <scope>TISSUE SPECIFICITY</scope>
    <source>
        <tissue>Embryo</tissue>
    </source>
</reference>
<reference key="3">
    <citation type="journal article" date="2000" name="Science">
        <title>The genome sequence of Drosophila melanogaster.</title>
        <authorList>
            <person name="Adams M.D."/>
            <person name="Celniker S.E."/>
            <person name="Holt R.A."/>
            <person name="Evans C.A."/>
            <person name="Gocayne J.D."/>
            <person name="Amanatides P.G."/>
            <person name="Scherer S.E."/>
            <person name="Li P.W."/>
            <person name="Hoskins R.A."/>
            <person name="Galle R.F."/>
            <person name="George R.A."/>
            <person name="Lewis S.E."/>
            <person name="Richards S."/>
            <person name="Ashburner M."/>
            <person name="Henderson S.N."/>
            <person name="Sutton G.G."/>
            <person name="Wortman J.R."/>
            <person name="Yandell M.D."/>
            <person name="Zhang Q."/>
            <person name="Chen L.X."/>
            <person name="Brandon R.C."/>
            <person name="Rogers Y.-H.C."/>
            <person name="Blazej R.G."/>
            <person name="Champe M."/>
            <person name="Pfeiffer B.D."/>
            <person name="Wan K.H."/>
            <person name="Doyle C."/>
            <person name="Baxter E.G."/>
            <person name="Helt G."/>
            <person name="Nelson C.R."/>
            <person name="Miklos G.L.G."/>
            <person name="Abril J.F."/>
            <person name="Agbayani A."/>
            <person name="An H.-J."/>
            <person name="Andrews-Pfannkoch C."/>
            <person name="Baldwin D."/>
            <person name="Ballew R.M."/>
            <person name="Basu A."/>
            <person name="Baxendale J."/>
            <person name="Bayraktaroglu L."/>
            <person name="Beasley E.M."/>
            <person name="Beeson K.Y."/>
            <person name="Benos P.V."/>
            <person name="Berman B.P."/>
            <person name="Bhandari D."/>
            <person name="Bolshakov S."/>
            <person name="Borkova D."/>
            <person name="Botchan M.R."/>
            <person name="Bouck J."/>
            <person name="Brokstein P."/>
            <person name="Brottier P."/>
            <person name="Burtis K.C."/>
            <person name="Busam D.A."/>
            <person name="Butler H."/>
            <person name="Cadieu E."/>
            <person name="Center A."/>
            <person name="Chandra I."/>
            <person name="Cherry J.M."/>
            <person name="Cawley S."/>
            <person name="Dahlke C."/>
            <person name="Davenport L.B."/>
            <person name="Davies P."/>
            <person name="de Pablos B."/>
            <person name="Delcher A."/>
            <person name="Deng Z."/>
            <person name="Mays A.D."/>
            <person name="Dew I."/>
            <person name="Dietz S.M."/>
            <person name="Dodson K."/>
            <person name="Doup L.E."/>
            <person name="Downes M."/>
            <person name="Dugan-Rocha S."/>
            <person name="Dunkov B.C."/>
            <person name="Dunn P."/>
            <person name="Durbin K.J."/>
            <person name="Evangelista C.C."/>
            <person name="Ferraz C."/>
            <person name="Ferriera S."/>
            <person name="Fleischmann W."/>
            <person name="Fosler C."/>
            <person name="Gabrielian A.E."/>
            <person name="Garg N.S."/>
            <person name="Gelbart W.M."/>
            <person name="Glasser K."/>
            <person name="Glodek A."/>
            <person name="Gong F."/>
            <person name="Gorrell J.H."/>
            <person name="Gu Z."/>
            <person name="Guan P."/>
            <person name="Harris M."/>
            <person name="Harris N.L."/>
            <person name="Harvey D.A."/>
            <person name="Heiman T.J."/>
            <person name="Hernandez J.R."/>
            <person name="Houck J."/>
            <person name="Hostin D."/>
            <person name="Houston K.A."/>
            <person name="Howland T.J."/>
            <person name="Wei M.-H."/>
            <person name="Ibegwam C."/>
            <person name="Jalali M."/>
            <person name="Kalush F."/>
            <person name="Karpen G.H."/>
            <person name="Ke Z."/>
            <person name="Kennison J.A."/>
            <person name="Ketchum K.A."/>
            <person name="Kimmel B.E."/>
            <person name="Kodira C.D."/>
            <person name="Kraft C.L."/>
            <person name="Kravitz S."/>
            <person name="Kulp D."/>
            <person name="Lai Z."/>
            <person name="Lasko P."/>
            <person name="Lei Y."/>
            <person name="Levitsky A.A."/>
            <person name="Li J.H."/>
            <person name="Li Z."/>
            <person name="Liang Y."/>
            <person name="Lin X."/>
            <person name="Liu X."/>
            <person name="Mattei B."/>
            <person name="McIntosh T.C."/>
            <person name="McLeod M.P."/>
            <person name="McPherson D."/>
            <person name="Merkulov G."/>
            <person name="Milshina N.V."/>
            <person name="Mobarry C."/>
            <person name="Morris J."/>
            <person name="Moshrefi A."/>
            <person name="Mount S.M."/>
            <person name="Moy M."/>
            <person name="Murphy B."/>
            <person name="Murphy L."/>
            <person name="Muzny D.M."/>
            <person name="Nelson D.L."/>
            <person name="Nelson D.R."/>
            <person name="Nelson K.A."/>
            <person name="Nixon K."/>
            <person name="Nusskern D.R."/>
            <person name="Pacleb J.M."/>
            <person name="Palazzolo M."/>
            <person name="Pittman G.S."/>
            <person name="Pan S."/>
            <person name="Pollard J."/>
            <person name="Puri V."/>
            <person name="Reese M.G."/>
            <person name="Reinert K."/>
            <person name="Remington K."/>
            <person name="Saunders R.D.C."/>
            <person name="Scheeler F."/>
            <person name="Shen H."/>
            <person name="Shue B.C."/>
            <person name="Siden-Kiamos I."/>
            <person name="Simpson M."/>
            <person name="Skupski M.P."/>
            <person name="Smith T.J."/>
            <person name="Spier E."/>
            <person name="Spradling A.C."/>
            <person name="Stapleton M."/>
            <person name="Strong R."/>
            <person name="Sun E."/>
            <person name="Svirskas R."/>
            <person name="Tector C."/>
            <person name="Turner R."/>
            <person name="Venter E."/>
            <person name="Wang A.H."/>
            <person name="Wang X."/>
            <person name="Wang Z.-Y."/>
            <person name="Wassarman D.A."/>
            <person name="Weinstock G.M."/>
            <person name="Weissenbach J."/>
            <person name="Williams S.M."/>
            <person name="Woodage T."/>
            <person name="Worley K.C."/>
            <person name="Wu D."/>
            <person name="Yang S."/>
            <person name="Yao Q.A."/>
            <person name="Ye J."/>
            <person name="Yeh R.-F."/>
            <person name="Zaveri J.S."/>
            <person name="Zhan M."/>
            <person name="Zhang G."/>
            <person name="Zhao Q."/>
            <person name="Zheng L."/>
            <person name="Zheng X.H."/>
            <person name="Zhong F.N."/>
            <person name="Zhong W."/>
            <person name="Zhou X."/>
            <person name="Zhu S.C."/>
            <person name="Zhu X."/>
            <person name="Smith H.O."/>
            <person name="Gibbs R.A."/>
            <person name="Myers E.W."/>
            <person name="Rubin G.M."/>
            <person name="Venter J.C."/>
        </authorList>
    </citation>
    <scope>NUCLEOTIDE SEQUENCE [LARGE SCALE GENOMIC DNA]</scope>
    <source>
        <strain>Berkeley</strain>
    </source>
</reference>
<reference key="4">
    <citation type="journal article" date="2002" name="Genome Biol.">
        <title>Annotation of the Drosophila melanogaster euchromatic genome: a systematic review.</title>
        <authorList>
            <person name="Misra S."/>
            <person name="Crosby M.A."/>
            <person name="Mungall C.J."/>
            <person name="Matthews B.B."/>
            <person name="Campbell K.S."/>
            <person name="Hradecky P."/>
            <person name="Huang Y."/>
            <person name="Kaminker J.S."/>
            <person name="Millburn G.H."/>
            <person name="Prochnik S.E."/>
            <person name="Smith C.D."/>
            <person name="Tupy J.L."/>
            <person name="Whitfield E.J."/>
            <person name="Bayraktaroglu L."/>
            <person name="Berman B.P."/>
            <person name="Bettencourt B.R."/>
            <person name="Celniker S.E."/>
            <person name="de Grey A.D.N.J."/>
            <person name="Drysdale R.A."/>
            <person name="Harris N.L."/>
            <person name="Richter J."/>
            <person name="Russo S."/>
            <person name="Schroeder A.J."/>
            <person name="Shu S.Q."/>
            <person name="Stapleton M."/>
            <person name="Yamada C."/>
            <person name="Ashburner M."/>
            <person name="Gelbart W.M."/>
            <person name="Rubin G.M."/>
            <person name="Lewis S.E."/>
        </authorList>
    </citation>
    <scope>GENOME REANNOTATION</scope>
    <source>
        <strain>Berkeley</strain>
    </source>
</reference>
<reference key="5">
    <citation type="journal article" date="2002" name="Genome Biol.">
        <title>A Drosophila full-length cDNA resource.</title>
        <authorList>
            <person name="Stapleton M."/>
            <person name="Carlson J.W."/>
            <person name="Brokstein P."/>
            <person name="Yu C."/>
            <person name="Champe M."/>
            <person name="George R.A."/>
            <person name="Guarin H."/>
            <person name="Kronmiller B."/>
            <person name="Pacleb J.M."/>
            <person name="Park S."/>
            <person name="Wan K.H."/>
            <person name="Rubin G.M."/>
            <person name="Celniker S.E."/>
        </authorList>
    </citation>
    <scope>NUCLEOTIDE SEQUENCE [LARGE SCALE MRNA]</scope>
    <source>
        <strain>Berkeley</strain>
        <tissue>Embryo</tissue>
    </source>
</reference>
<reference key="6">
    <citation type="journal article" date="2002" name="J. Cell Sci.">
        <title>The Drosophila gap junction channel gene innexin 2 controls foregut development in response to Wingless signalling.</title>
        <authorList>
            <person name="Bauer R."/>
            <person name="Lehmann C."/>
            <person name="Fuss B."/>
            <person name="Eckardt F."/>
            <person name="Hoch M."/>
        </authorList>
    </citation>
    <scope>FUNCTION</scope>
    <scope>SUBCELLULAR LOCATION</scope>
    <scope>TISSUE SPECIFICITY</scope>
    <scope>DEVELOPMENTAL STAGE</scope>
    <scope>INDUCTION</scope>
    <scope>DISRUPTION PHENOTYPE</scope>
</reference>
<reference key="7">
    <citation type="journal article" date="2002" name="Mech. Dev.">
        <title>Gap junctions in Drosophila: developmental expression of the entire innexin gene family.</title>
        <authorList>
            <person name="Stebbings L.A."/>
            <person name="Todman M.G."/>
            <person name="Phillips R."/>
            <person name="Greer C.E."/>
            <person name="Tam J."/>
            <person name="Phelan P."/>
            <person name="Jacobs K."/>
            <person name="Bacon J.P."/>
            <person name="Davies J.A."/>
        </authorList>
    </citation>
    <scope>TISSUE SPECIFICITY</scope>
    <scope>DEVELOPMENTAL STAGE</scope>
</reference>
<reference key="8">
    <citation type="journal article" date="2004" name="Mol. Biol. Cell">
        <title>Gap junction channel protein innexin 2 is essential for epithelial morphogenesis in the Drosophila embryo.</title>
        <authorList>
            <person name="Bauer R."/>
            <person name="Lehmann C."/>
            <person name="Martini J."/>
            <person name="Eckardt F."/>
            <person name="Hoch M."/>
        </authorList>
    </citation>
    <scope>FUNCTION</scope>
    <scope>INTERACTION WITH SHG AND ARM</scope>
    <scope>SUBCELLULAR LOCATION</scope>
    <scope>TISSUE SPECIFICITY</scope>
    <scope>DISRUPTION PHENOTYPE</scope>
</reference>
<reference key="9">
    <citation type="journal article" date="2006" name="Mol. Biol. Cell">
        <title>Heteromerization of innexin gap junction proteins regulates epithelial tissue organization in Drosophila.</title>
        <authorList>
            <person name="Lehmann C."/>
            <person name="Lechner H."/>
            <person name="Loer B."/>
            <person name="Knieps M."/>
            <person name="Herrmann S."/>
            <person name="Famulok M."/>
            <person name="Bauer R."/>
            <person name="Hoch M."/>
        </authorList>
    </citation>
    <scope>INTERACTION WITH INX3</scope>
    <scope>SUBCELLULAR LOCATION</scope>
    <scope>TISSUE SPECIFICITY</scope>
    <scope>DEVELOPMENTAL STAGE</scope>
</reference>
<reference key="10">
    <citation type="journal article" date="2008" name="BMC Dev. Biol.">
        <title>Gap junctions in the ovary of Drosophila melanogaster: localization of innexins 1, 2, 3 and 4 and evidence for intercellular communication via innexin-2 containing channels.</title>
        <authorList>
            <person name="Bohrmann J."/>
            <person name="Zimmermann J."/>
        </authorList>
    </citation>
    <scope>FUNCTION</scope>
    <scope>SUBCELLULAR LOCATION</scope>
    <scope>TISSUE SPECIFICITY</scope>
</reference>
<reference key="11">
    <citation type="journal article" date="2011" name="Mech. Dev.">
        <title>Innexin2 gap junctions in somatic support cells are required for cyst formation and for egg chamber formation in Drosophila.</title>
        <authorList>
            <person name="Mukai M."/>
            <person name="Kato H."/>
            <person name="Hira S."/>
            <person name="Nakamura K."/>
            <person name="Kita H."/>
            <person name="Kobayashi S."/>
        </authorList>
    </citation>
    <scope>FUNCTION</scope>
    <scope>TISSUE SPECIFICITY</scope>
    <scope>DISRUPTION PHENOTYPE</scope>
</reference>
<keyword id="KW-0965">Cell junction</keyword>
<keyword id="KW-1003">Cell membrane</keyword>
<keyword id="KW-0963">Cytoplasm</keyword>
<keyword id="KW-0217">Developmental protein</keyword>
<keyword id="KW-0221">Differentiation</keyword>
<keyword id="KW-0303">Gap junction</keyword>
<keyword id="KW-0407">Ion channel</keyword>
<keyword id="KW-0406">Ion transport</keyword>
<keyword id="KW-0472">Membrane</keyword>
<keyword id="KW-0896">Oogenesis</keyword>
<keyword id="KW-1185">Reference proteome</keyword>
<keyword id="KW-0812">Transmembrane</keyword>
<keyword id="KW-1133">Transmembrane helix</keyword>
<keyword id="KW-0813">Transport</keyword>
<name>INX2_DROME</name>
<sequence>MFDVFGSVKGLLKIDQVCIDNNVFRMHYKATVIILIAFSLLVTSRQYIGDPIDCIVDEIPLGVMDTYCWIYSTFTVPERLTGITGRDVVQPGVGSHVEGEDEVKYHKYYQWVCFVLFFQAILFYVPRYLWKSWEGGRLKMLVMDLNSPIVNDECKNDRKKILVDYFIGNLNRHNFYAFRFFVCEALNFVNVIGQIYFVDFFLDGEFSTYGSDVLKFTELEPDERIDPMARVFPKVTKCTFHKYGPSGSVQTHDGLCVLPLNIVNEKIYVFLWFWFIILSIMSGISLIYRIAVVAGPKLRHLLLRARSRLAESEEVELVANKCNIGDWFLLYQLGKNIDPLIYKEVISDLSREMSGDEHSAHKRPFDA</sequence>
<proteinExistence type="evidence at protein level"/>
<dbReference type="EMBL" id="AF137269">
    <property type="protein sequence ID" value="AAD50378.1"/>
    <property type="molecule type" value="mRNA"/>
</dbReference>
<dbReference type="EMBL" id="AF172257">
    <property type="protein sequence ID" value="AAF87943.1"/>
    <property type="molecule type" value="mRNA"/>
</dbReference>
<dbReference type="EMBL" id="AE014298">
    <property type="protein sequence ID" value="AAF46229.1"/>
    <property type="molecule type" value="Genomic_DNA"/>
</dbReference>
<dbReference type="EMBL" id="AE014298">
    <property type="protein sequence ID" value="AAN09193.1"/>
    <property type="molecule type" value="Genomic_DNA"/>
</dbReference>
<dbReference type="EMBL" id="AY060368">
    <property type="protein sequence ID" value="AAL25407.1"/>
    <property type="molecule type" value="mRNA"/>
</dbReference>
<dbReference type="RefSeq" id="NP_001162684.1">
    <property type="nucleotide sequence ID" value="NM_001169213.2"/>
</dbReference>
<dbReference type="RefSeq" id="NP_001259301.1">
    <property type="nucleotide sequence ID" value="NM_001272372.1"/>
</dbReference>
<dbReference type="RefSeq" id="NP_572375.1">
    <property type="nucleotide sequence ID" value="NM_132147.4"/>
</dbReference>
<dbReference type="RefSeq" id="NP_727150.1">
    <property type="nucleotide sequence ID" value="NM_167104.3"/>
</dbReference>
<dbReference type="SMR" id="Q9V427"/>
<dbReference type="BioGRID" id="58124">
    <property type="interactions" value="5"/>
</dbReference>
<dbReference type="DIP" id="DIP-22749N"/>
<dbReference type="FunCoup" id="Q9V427">
    <property type="interactions" value="52"/>
</dbReference>
<dbReference type="IntAct" id="Q9V427">
    <property type="interactions" value="1"/>
</dbReference>
<dbReference type="STRING" id="7227.FBpp0304593"/>
<dbReference type="TCDB" id="1.A.25.1.14">
    <property type="family name" value="the gap junction-forming innexin (innexin) family"/>
</dbReference>
<dbReference type="PaxDb" id="7227-FBpp0070966"/>
<dbReference type="DNASU" id="31646"/>
<dbReference type="EnsemblMetazoa" id="FBtr0071005">
    <property type="protein sequence ID" value="FBpp0070965"/>
    <property type="gene ID" value="FBgn0027108"/>
</dbReference>
<dbReference type="EnsemblMetazoa" id="FBtr0071006">
    <property type="protein sequence ID" value="FBpp0070966"/>
    <property type="gene ID" value="FBgn0027108"/>
</dbReference>
<dbReference type="EnsemblMetazoa" id="FBtr0301860">
    <property type="protein sequence ID" value="FBpp0291074"/>
    <property type="gene ID" value="FBgn0027108"/>
</dbReference>
<dbReference type="EnsemblMetazoa" id="FBtr0332314">
    <property type="protein sequence ID" value="FBpp0304593"/>
    <property type="gene ID" value="FBgn0027108"/>
</dbReference>
<dbReference type="GeneID" id="31646"/>
<dbReference type="KEGG" id="dme:Dmel_CG4590"/>
<dbReference type="AGR" id="FB:FBgn0027108"/>
<dbReference type="CTD" id="31646"/>
<dbReference type="FlyBase" id="FBgn0027108">
    <property type="gene designation" value="Inx2"/>
</dbReference>
<dbReference type="VEuPathDB" id="VectorBase:FBgn0027108"/>
<dbReference type="eggNOG" id="ENOG502QR27">
    <property type="taxonomic scope" value="Eukaryota"/>
</dbReference>
<dbReference type="HOGENOM" id="CLU_035763_1_1_1"/>
<dbReference type="InParanoid" id="Q9V427"/>
<dbReference type="OMA" id="PIVNEEC"/>
<dbReference type="OrthoDB" id="5867527at2759"/>
<dbReference type="PhylomeDB" id="Q9V427"/>
<dbReference type="BioGRID-ORCS" id="31646">
    <property type="hits" value="0 hits in 1 CRISPR screen"/>
</dbReference>
<dbReference type="GenomeRNAi" id="31646"/>
<dbReference type="PRO" id="PR:Q9V427"/>
<dbReference type="Proteomes" id="UP000000803">
    <property type="component" value="Chromosome X"/>
</dbReference>
<dbReference type="Bgee" id="FBgn0027108">
    <property type="expression patterns" value="Expressed in wing disc and 225 other cell types or tissues"/>
</dbReference>
<dbReference type="ExpressionAtlas" id="Q9V427">
    <property type="expression patterns" value="baseline and differential"/>
</dbReference>
<dbReference type="GO" id="GO:0016324">
    <property type="term" value="C:apical plasma membrane"/>
    <property type="evidence" value="ECO:0000314"/>
    <property type="project" value="FlyBase"/>
</dbReference>
<dbReference type="GO" id="GO:0016327">
    <property type="term" value="C:apicolateral plasma membrane"/>
    <property type="evidence" value="ECO:0000314"/>
    <property type="project" value="FlyBase"/>
</dbReference>
<dbReference type="GO" id="GO:0016323">
    <property type="term" value="C:basolateral plasma membrane"/>
    <property type="evidence" value="ECO:0007669"/>
    <property type="project" value="UniProtKB-SubCell"/>
</dbReference>
<dbReference type="GO" id="GO:0005737">
    <property type="term" value="C:cytoplasm"/>
    <property type="evidence" value="ECO:0007669"/>
    <property type="project" value="UniProtKB-SubCell"/>
</dbReference>
<dbReference type="GO" id="GO:0005921">
    <property type="term" value="C:gap junction"/>
    <property type="evidence" value="ECO:0000314"/>
    <property type="project" value="UniProtKB"/>
</dbReference>
<dbReference type="GO" id="GO:0016328">
    <property type="term" value="C:lateral plasma membrane"/>
    <property type="evidence" value="ECO:0007669"/>
    <property type="project" value="UniProtKB-SubCell"/>
</dbReference>
<dbReference type="GO" id="GO:0016020">
    <property type="term" value="C:membrane"/>
    <property type="evidence" value="ECO:0000303"/>
    <property type="project" value="UniProtKB"/>
</dbReference>
<dbReference type="GO" id="GO:0005886">
    <property type="term" value="C:plasma membrane"/>
    <property type="evidence" value="ECO:0000318"/>
    <property type="project" value="GO_Central"/>
</dbReference>
<dbReference type="GO" id="GO:0005243">
    <property type="term" value="F:gap junction channel activity"/>
    <property type="evidence" value="ECO:0000314"/>
    <property type="project" value="FlyBase"/>
</dbReference>
<dbReference type="GO" id="GO:0007154">
    <property type="term" value="P:cell communication"/>
    <property type="evidence" value="ECO:0000314"/>
    <property type="project" value="FlyBase"/>
</dbReference>
<dbReference type="GO" id="GO:0007440">
    <property type="term" value="P:foregut morphogenesis"/>
    <property type="evidence" value="ECO:0000315"/>
    <property type="project" value="FlyBase"/>
</dbReference>
<dbReference type="GO" id="GO:0007293">
    <property type="term" value="P:germarium-derived egg chamber formation"/>
    <property type="evidence" value="ECO:0000315"/>
    <property type="project" value="FlyBase"/>
</dbReference>
<dbReference type="GO" id="GO:0030727">
    <property type="term" value="P:germarium-derived female germ-line cyst formation"/>
    <property type="evidence" value="ECO:0000315"/>
    <property type="project" value="FlyBase"/>
</dbReference>
<dbReference type="GO" id="GO:0010496">
    <property type="term" value="P:intercellular transport"/>
    <property type="evidence" value="ECO:0000314"/>
    <property type="project" value="FlyBase"/>
</dbReference>
<dbReference type="GO" id="GO:0036098">
    <property type="term" value="P:male germ-line stem cell population maintenance"/>
    <property type="evidence" value="ECO:0000315"/>
    <property type="project" value="FlyBase"/>
</dbReference>
<dbReference type="GO" id="GO:0034220">
    <property type="term" value="P:monoatomic ion transmembrane transport"/>
    <property type="evidence" value="ECO:0007669"/>
    <property type="project" value="UniProtKB-KW"/>
</dbReference>
<dbReference type="GO" id="GO:0016331">
    <property type="term" value="P:morphogenesis of embryonic epithelium"/>
    <property type="evidence" value="ECO:0000315"/>
    <property type="project" value="FlyBase"/>
</dbReference>
<dbReference type="GO" id="GO:0007602">
    <property type="term" value="P:phototransduction"/>
    <property type="evidence" value="ECO:0000318"/>
    <property type="project" value="GO_Central"/>
</dbReference>
<dbReference type="GO" id="GO:0007283">
    <property type="term" value="P:spermatogenesis"/>
    <property type="evidence" value="ECO:0000315"/>
    <property type="project" value="FlyBase"/>
</dbReference>
<dbReference type="InterPro" id="IPR000990">
    <property type="entry name" value="Innexin"/>
</dbReference>
<dbReference type="PANTHER" id="PTHR11893">
    <property type="entry name" value="INNEXIN"/>
    <property type="match status" value="1"/>
</dbReference>
<dbReference type="PANTHER" id="PTHR11893:SF41">
    <property type="entry name" value="INNEXIN INX2"/>
    <property type="match status" value="1"/>
</dbReference>
<dbReference type="Pfam" id="PF00876">
    <property type="entry name" value="Innexin"/>
    <property type="match status" value="1"/>
</dbReference>
<dbReference type="PRINTS" id="PR01262">
    <property type="entry name" value="INNEXIN"/>
</dbReference>
<dbReference type="PROSITE" id="PS51013">
    <property type="entry name" value="PANNEXIN"/>
    <property type="match status" value="1"/>
</dbReference>